<protein>
    <recommendedName>
        <fullName evidence="1">Putative phosphoenolpyruvate synthase regulatory protein</fullName>
        <shortName evidence="1">PEP synthase regulatory protein</shortName>
        <shortName evidence="1">PSRP</shortName>
        <ecNumber evidence="1">2.7.11.33</ecNumber>
        <ecNumber evidence="1">2.7.4.28</ecNumber>
    </recommendedName>
    <alternativeName>
        <fullName evidence="1">Pyruvate, water dikinase regulatory protein</fullName>
    </alternativeName>
</protein>
<proteinExistence type="inferred from homology"/>
<sequence length="271" mass="30834">MLPTVFIVSDGTGITAETFAHSILSQFDQKFRLVRVPFIDSIEKAYDTVRKINDAAQHDGRRPIVFTTLVDGESNEIVKRSNALVLDMFQRFVEPLEQELQLKSSHAMGRVHQNADTEEYKTRIEAINFSLAHDDGQSNRNLADADVILIGVSRSGKTPTSLYLAMQYGVKAANYPLIPEDFERGKLPTPLHPHRDKLFGLSIDPMRLSEIRNERRPGSKYAAPENCRYEINEAEAMMRREGVKWLSSTHKSIEEIATTILQEIKLERQSY</sequence>
<name>PSRP_BURP1</name>
<gene>
    <name type="ordered locus">BURPS1710b_2566</name>
</gene>
<reference key="1">
    <citation type="journal article" date="2010" name="Genome Biol. Evol.">
        <title>Continuing evolution of Burkholderia mallei through genome reduction and large-scale rearrangements.</title>
        <authorList>
            <person name="Losada L."/>
            <person name="Ronning C.M."/>
            <person name="DeShazer D."/>
            <person name="Woods D."/>
            <person name="Fedorova N."/>
            <person name="Kim H.S."/>
            <person name="Shabalina S.A."/>
            <person name="Pearson T.R."/>
            <person name="Brinkac L."/>
            <person name="Tan P."/>
            <person name="Nandi T."/>
            <person name="Crabtree J."/>
            <person name="Badger J."/>
            <person name="Beckstrom-Sternberg S."/>
            <person name="Saqib M."/>
            <person name="Schutzer S.E."/>
            <person name="Keim P."/>
            <person name="Nierman W.C."/>
        </authorList>
    </citation>
    <scope>NUCLEOTIDE SEQUENCE [LARGE SCALE GENOMIC DNA]</scope>
    <source>
        <strain>1710b</strain>
    </source>
</reference>
<feature type="chain" id="PRO_0000316651" description="Putative phosphoenolpyruvate synthase regulatory protein">
    <location>
        <begin position="1"/>
        <end position="271"/>
    </location>
</feature>
<feature type="binding site" evidence="1">
    <location>
        <begin position="151"/>
        <end position="158"/>
    </location>
    <ligand>
        <name>ADP</name>
        <dbReference type="ChEBI" id="CHEBI:456216"/>
    </ligand>
</feature>
<evidence type="ECO:0000255" key="1">
    <source>
        <dbReference type="HAMAP-Rule" id="MF_01062"/>
    </source>
</evidence>
<dbReference type="EC" id="2.7.11.33" evidence="1"/>
<dbReference type="EC" id="2.7.4.28" evidence="1"/>
<dbReference type="EMBL" id="CP000124">
    <property type="protein sequence ID" value="ABA49347.1"/>
    <property type="molecule type" value="Genomic_DNA"/>
</dbReference>
<dbReference type="RefSeq" id="WP_004192738.1">
    <property type="nucleotide sequence ID" value="NC_007434.1"/>
</dbReference>
<dbReference type="SMR" id="Q3JR45"/>
<dbReference type="EnsemblBacteria" id="ABA49347">
    <property type="protein sequence ID" value="ABA49347"/>
    <property type="gene ID" value="BURPS1710b_2566"/>
</dbReference>
<dbReference type="KEGG" id="bpm:BURPS1710b_2566"/>
<dbReference type="HOGENOM" id="CLU_046206_1_0_4"/>
<dbReference type="Proteomes" id="UP000002700">
    <property type="component" value="Chromosome I"/>
</dbReference>
<dbReference type="GO" id="GO:0043531">
    <property type="term" value="F:ADP binding"/>
    <property type="evidence" value="ECO:0007669"/>
    <property type="project" value="UniProtKB-UniRule"/>
</dbReference>
<dbReference type="GO" id="GO:0005524">
    <property type="term" value="F:ATP binding"/>
    <property type="evidence" value="ECO:0007669"/>
    <property type="project" value="InterPro"/>
</dbReference>
<dbReference type="GO" id="GO:0016776">
    <property type="term" value="F:phosphotransferase activity, phosphate group as acceptor"/>
    <property type="evidence" value="ECO:0007669"/>
    <property type="project" value="UniProtKB-UniRule"/>
</dbReference>
<dbReference type="GO" id="GO:0004674">
    <property type="term" value="F:protein serine/threonine kinase activity"/>
    <property type="evidence" value="ECO:0007669"/>
    <property type="project" value="UniProtKB-UniRule"/>
</dbReference>
<dbReference type="HAMAP" id="MF_01062">
    <property type="entry name" value="PSRP"/>
    <property type="match status" value="1"/>
</dbReference>
<dbReference type="InterPro" id="IPR005177">
    <property type="entry name" value="Kinase-pyrophosphorylase"/>
</dbReference>
<dbReference type="InterPro" id="IPR026530">
    <property type="entry name" value="PSRP"/>
</dbReference>
<dbReference type="NCBIfam" id="NF003742">
    <property type="entry name" value="PRK05339.1"/>
    <property type="match status" value="1"/>
</dbReference>
<dbReference type="PANTHER" id="PTHR31756">
    <property type="entry name" value="PYRUVATE, PHOSPHATE DIKINASE REGULATORY PROTEIN 1, CHLOROPLASTIC"/>
    <property type="match status" value="1"/>
</dbReference>
<dbReference type="PANTHER" id="PTHR31756:SF3">
    <property type="entry name" value="PYRUVATE, PHOSPHATE DIKINASE REGULATORY PROTEIN 1, CHLOROPLASTIC"/>
    <property type="match status" value="1"/>
</dbReference>
<dbReference type="Pfam" id="PF03618">
    <property type="entry name" value="Kinase-PPPase"/>
    <property type="match status" value="1"/>
</dbReference>
<comment type="function">
    <text evidence="1">Bifunctional serine/threonine kinase and phosphorylase involved in the regulation of the phosphoenolpyruvate synthase (PEPS) by catalyzing its phosphorylation/dephosphorylation.</text>
</comment>
<comment type="catalytic activity">
    <reaction evidence="1">
        <text>[pyruvate, water dikinase] + ADP = [pyruvate, water dikinase]-phosphate + AMP + H(+)</text>
        <dbReference type="Rhea" id="RHEA:46020"/>
        <dbReference type="Rhea" id="RHEA-COMP:11425"/>
        <dbReference type="Rhea" id="RHEA-COMP:11426"/>
        <dbReference type="ChEBI" id="CHEBI:15378"/>
        <dbReference type="ChEBI" id="CHEBI:43176"/>
        <dbReference type="ChEBI" id="CHEBI:68546"/>
        <dbReference type="ChEBI" id="CHEBI:456215"/>
        <dbReference type="ChEBI" id="CHEBI:456216"/>
        <dbReference type="EC" id="2.7.11.33"/>
    </reaction>
</comment>
<comment type="catalytic activity">
    <reaction evidence="1">
        <text>[pyruvate, water dikinase]-phosphate + phosphate + H(+) = [pyruvate, water dikinase] + diphosphate</text>
        <dbReference type="Rhea" id="RHEA:48580"/>
        <dbReference type="Rhea" id="RHEA-COMP:11425"/>
        <dbReference type="Rhea" id="RHEA-COMP:11426"/>
        <dbReference type="ChEBI" id="CHEBI:15378"/>
        <dbReference type="ChEBI" id="CHEBI:33019"/>
        <dbReference type="ChEBI" id="CHEBI:43176"/>
        <dbReference type="ChEBI" id="CHEBI:43474"/>
        <dbReference type="ChEBI" id="CHEBI:68546"/>
        <dbReference type="EC" id="2.7.4.28"/>
    </reaction>
</comment>
<comment type="similarity">
    <text evidence="1">Belongs to the pyruvate, phosphate/water dikinase regulatory protein family. PSRP subfamily.</text>
</comment>
<organism>
    <name type="scientific">Burkholderia pseudomallei (strain 1710b)</name>
    <dbReference type="NCBI Taxonomy" id="320372"/>
    <lineage>
        <taxon>Bacteria</taxon>
        <taxon>Pseudomonadati</taxon>
        <taxon>Pseudomonadota</taxon>
        <taxon>Betaproteobacteria</taxon>
        <taxon>Burkholderiales</taxon>
        <taxon>Burkholderiaceae</taxon>
        <taxon>Burkholderia</taxon>
        <taxon>pseudomallei group</taxon>
    </lineage>
</organism>
<keyword id="KW-0418">Kinase</keyword>
<keyword id="KW-0547">Nucleotide-binding</keyword>
<keyword id="KW-0723">Serine/threonine-protein kinase</keyword>
<keyword id="KW-0808">Transferase</keyword>
<accession>Q3JR45</accession>